<geneLocation type="chloroplast"/>
<organism>
    <name type="scientific">Porphyra purpurea</name>
    <name type="common">Red seaweed</name>
    <name type="synonym">Ulva purpurea</name>
    <dbReference type="NCBI Taxonomy" id="2787"/>
    <lineage>
        <taxon>Eukaryota</taxon>
        <taxon>Rhodophyta</taxon>
        <taxon>Bangiophyceae</taxon>
        <taxon>Bangiales</taxon>
        <taxon>Bangiaceae</taxon>
        <taxon>Porphyra</taxon>
    </lineage>
</organism>
<accession>P51226</accession>
<proteinExistence type="inferred from homology"/>
<dbReference type="EC" id="4.1.1.39" evidence="1"/>
<dbReference type="EMBL" id="U38804">
    <property type="protein sequence ID" value="AAC08112.1"/>
    <property type="molecule type" value="Genomic_DNA"/>
</dbReference>
<dbReference type="PIR" id="S73147">
    <property type="entry name" value="S73147"/>
</dbReference>
<dbReference type="RefSeq" id="NP_053836.1">
    <property type="nucleotide sequence ID" value="NC_000925.1"/>
</dbReference>
<dbReference type="SMR" id="P51226"/>
<dbReference type="GeneID" id="809853"/>
<dbReference type="GO" id="GO:0009507">
    <property type="term" value="C:chloroplast"/>
    <property type="evidence" value="ECO:0007669"/>
    <property type="project" value="UniProtKB-SubCell"/>
</dbReference>
<dbReference type="GO" id="GO:0000287">
    <property type="term" value="F:magnesium ion binding"/>
    <property type="evidence" value="ECO:0007669"/>
    <property type="project" value="UniProtKB-UniRule"/>
</dbReference>
<dbReference type="GO" id="GO:0004497">
    <property type="term" value="F:monooxygenase activity"/>
    <property type="evidence" value="ECO:0007669"/>
    <property type="project" value="UniProtKB-KW"/>
</dbReference>
<dbReference type="GO" id="GO:0016984">
    <property type="term" value="F:ribulose-bisphosphate carboxylase activity"/>
    <property type="evidence" value="ECO:0007669"/>
    <property type="project" value="UniProtKB-UniRule"/>
</dbReference>
<dbReference type="GO" id="GO:0019253">
    <property type="term" value="P:reductive pentose-phosphate cycle"/>
    <property type="evidence" value="ECO:0007669"/>
    <property type="project" value="UniProtKB-UniRule"/>
</dbReference>
<dbReference type="CDD" id="cd08212">
    <property type="entry name" value="RuBisCO_large_I"/>
    <property type="match status" value="1"/>
</dbReference>
<dbReference type="Gene3D" id="3.20.20.110">
    <property type="entry name" value="Ribulose bisphosphate carboxylase, large subunit, C-terminal domain"/>
    <property type="match status" value="1"/>
</dbReference>
<dbReference type="Gene3D" id="3.30.70.150">
    <property type="entry name" value="RuBisCO large subunit, N-terminal domain"/>
    <property type="match status" value="1"/>
</dbReference>
<dbReference type="HAMAP" id="MF_01338">
    <property type="entry name" value="RuBisCO_L_type1"/>
    <property type="match status" value="1"/>
</dbReference>
<dbReference type="InterPro" id="IPR033966">
    <property type="entry name" value="RuBisCO"/>
</dbReference>
<dbReference type="InterPro" id="IPR020878">
    <property type="entry name" value="RuBisCo_large_chain_AS"/>
</dbReference>
<dbReference type="InterPro" id="IPR000685">
    <property type="entry name" value="RuBisCO_lsu_C"/>
</dbReference>
<dbReference type="InterPro" id="IPR036376">
    <property type="entry name" value="RuBisCO_lsu_C_sf"/>
</dbReference>
<dbReference type="InterPro" id="IPR017443">
    <property type="entry name" value="RuBisCO_lsu_fd_N"/>
</dbReference>
<dbReference type="InterPro" id="IPR036422">
    <property type="entry name" value="RuBisCO_lsu_N_sf"/>
</dbReference>
<dbReference type="InterPro" id="IPR020888">
    <property type="entry name" value="RuBisCO_lsuI"/>
</dbReference>
<dbReference type="NCBIfam" id="NF003252">
    <property type="entry name" value="PRK04208.1"/>
    <property type="match status" value="1"/>
</dbReference>
<dbReference type="PANTHER" id="PTHR42704">
    <property type="entry name" value="RIBULOSE BISPHOSPHATE CARBOXYLASE"/>
    <property type="match status" value="1"/>
</dbReference>
<dbReference type="PANTHER" id="PTHR42704:SF17">
    <property type="entry name" value="RIBULOSE BISPHOSPHATE CARBOXYLASE LARGE CHAIN"/>
    <property type="match status" value="1"/>
</dbReference>
<dbReference type="Pfam" id="PF00016">
    <property type="entry name" value="RuBisCO_large"/>
    <property type="match status" value="1"/>
</dbReference>
<dbReference type="Pfam" id="PF02788">
    <property type="entry name" value="RuBisCO_large_N"/>
    <property type="match status" value="1"/>
</dbReference>
<dbReference type="SFLD" id="SFLDG01052">
    <property type="entry name" value="RuBisCO"/>
    <property type="match status" value="1"/>
</dbReference>
<dbReference type="SFLD" id="SFLDS00014">
    <property type="entry name" value="RuBisCO"/>
    <property type="match status" value="1"/>
</dbReference>
<dbReference type="SFLD" id="SFLDG00301">
    <property type="entry name" value="RuBisCO-like_proteins"/>
    <property type="match status" value="1"/>
</dbReference>
<dbReference type="SUPFAM" id="SSF51649">
    <property type="entry name" value="RuBisCo, C-terminal domain"/>
    <property type="match status" value="1"/>
</dbReference>
<dbReference type="SUPFAM" id="SSF54966">
    <property type="entry name" value="RuBisCO, large subunit, small (N-terminal) domain"/>
    <property type="match status" value="1"/>
</dbReference>
<dbReference type="PROSITE" id="PS00157">
    <property type="entry name" value="RUBISCO_LARGE"/>
    <property type="match status" value="1"/>
</dbReference>
<feature type="chain" id="PRO_0000062574" description="Ribulose bisphosphate carboxylase large chain">
    <location>
        <begin position="1"/>
        <end position="488"/>
    </location>
</feature>
<feature type="active site" description="Proton acceptor" evidence="1">
    <location>
        <position position="179"/>
    </location>
</feature>
<feature type="active site" description="Proton acceptor" evidence="1">
    <location>
        <position position="297"/>
    </location>
</feature>
<feature type="binding site" description="in homodimeric partner" evidence="1">
    <location>
        <position position="127"/>
    </location>
    <ligand>
        <name>substrate</name>
    </ligand>
</feature>
<feature type="binding site" evidence="1">
    <location>
        <position position="177"/>
    </location>
    <ligand>
        <name>substrate</name>
    </ligand>
</feature>
<feature type="binding site" evidence="1">
    <location>
        <position position="181"/>
    </location>
    <ligand>
        <name>substrate</name>
    </ligand>
</feature>
<feature type="binding site" description="via carbamate group" evidence="1">
    <location>
        <position position="205"/>
    </location>
    <ligand>
        <name>Mg(2+)</name>
        <dbReference type="ChEBI" id="CHEBI:18420"/>
    </ligand>
</feature>
<feature type="binding site" evidence="1">
    <location>
        <position position="207"/>
    </location>
    <ligand>
        <name>Mg(2+)</name>
        <dbReference type="ChEBI" id="CHEBI:18420"/>
    </ligand>
</feature>
<feature type="binding site" evidence="1">
    <location>
        <position position="208"/>
    </location>
    <ligand>
        <name>Mg(2+)</name>
        <dbReference type="ChEBI" id="CHEBI:18420"/>
    </ligand>
</feature>
<feature type="binding site" evidence="1">
    <location>
        <position position="298"/>
    </location>
    <ligand>
        <name>substrate</name>
    </ligand>
</feature>
<feature type="binding site" evidence="1">
    <location>
        <position position="330"/>
    </location>
    <ligand>
        <name>substrate</name>
    </ligand>
</feature>
<feature type="binding site" evidence="1">
    <location>
        <position position="382"/>
    </location>
    <ligand>
        <name>substrate</name>
    </ligand>
</feature>
<feature type="site" description="Transition state stabilizer" evidence="1">
    <location>
        <position position="337"/>
    </location>
</feature>
<feature type="modified residue" description="N6-carboxylysine" evidence="1">
    <location>
        <position position="205"/>
    </location>
</feature>
<keyword id="KW-0113">Calvin cycle</keyword>
<keyword id="KW-0120">Carbon dioxide fixation</keyword>
<keyword id="KW-0150">Chloroplast</keyword>
<keyword id="KW-0456">Lyase</keyword>
<keyword id="KW-0460">Magnesium</keyword>
<keyword id="KW-0479">Metal-binding</keyword>
<keyword id="KW-0503">Monooxygenase</keyword>
<keyword id="KW-0560">Oxidoreductase</keyword>
<keyword id="KW-0601">Photorespiration</keyword>
<keyword id="KW-0602">Photosynthesis</keyword>
<keyword id="KW-0934">Plastid</keyword>
<name>RBL_PORPU</name>
<protein>
    <recommendedName>
        <fullName evidence="1">Ribulose bisphosphate carboxylase large chain</fullName>
        <shortName evidence="1">RuBisCO large subunit</shortName>
        <ecNumber evidence="1">4.1.1.39</ecNumber>
    </recommendedName>
</protein>
<sequence>MSQSVESRTRIKSERYESGVIPYAKMGYWDADYVIKETDILALFRITPQPGVDPIEASAAIAGESSTATWTVVWTDLLTACDLYRAKAYRVDPVPNVADQYFAYIAYDIDLFEEGSIANLTASIIGNVFGFKAVKALRLEDMRMPVAYLKTFQGPATGLIVERERMDKFGRPFLGATVKPKLGLSGKNYGRVVYEGLKGGLDFLKDDENINSQPFMRWRERFLYSMEGVNKASAAAGEIKGHYLNVTAATMEDMYERAEFSKVVGSIICMIDLVIGYTAIQSMAIWARKNDMILHLHRAGNSTYSRQKNHGMNFRVICKWMRMAGVDHIHAGTVVGKLEGDPLMIKGFYNTLLAGETEINLPQGLFFAQNWASLRKVVPVASGGIHAGQMHQLLDYLGDDVVLQFGGGTIGHPDGIQAGATANRVALESMVMARNEGRDFVAEGPQILRDAAKTCGPLQTALDLWKDISFNYTSTDTADFVETPTANV</sequence>
<reference key="1">
    <citation type="journal article" date="1995" name="Plant Mol. Biol. Rep.">
        <title>Complete nucleotide sequence of the Porphyra purpurea chloroplast genome.</title>
        <authorList>
            <person name="Reith M.E."/>
            <person name="Munholland J."/>
        </authorList>
    </citation>
    <scope>NUCLEOTIDE SEQUENCE [LARGE SCALE GENOMIC DNA]</scope>
    <source>
        <strain>Avonport</strain>
    </source>
</reference>
<gene>
    <name evidence="1" type="primary">rbcL</name>
</gene>
<comment type="function">
    <text evidence="1">RuBisCO catalyzes two reactions: the carboxylation of D-ribulose 1,5-bisphosphate, the primary event in carbon dioxide fixation, as well as the oxidative fragmentation of the pentose substrate in the photorespiration process. Both reactions occur simultaneously and in competition at the same active site.</text>
</comment>
<comment type="catalytic activity">
    <reaction evidence="1">
        <text>2 (2R)-3-phosphoglycerate + 2 H(+) = D-ribulose 1,5-bisphosphate + CO2 + H2O</text>
        <dbReference type="Rhea" id="RHEA:23124"/>
        <dbReference type="ChEBI" id="CHEBI:15377"/>
        <dbReference type="ChEBI" id="CHEBI:15378"/>
        <dbReference type="ChEBI" id="CHEBI:16526"/>
        <dbReference type="ChEBI" id="CHEBI:57870"/>
        <dbReference type="ChEBI" id="CHEBI:58272"/>
        <dbReference type="EC" id="4.1.1.39"/>
    </reaction>
</comment>
<comment type="catalytic activity">
    <reaction evidence="1">
        <text>D-ribulose 1,5-bisphosphate + O2 = 2-phosphoglycolate + (2R)-3-phosphoglycerate + 2 H(+)</text>
        <dbReference type="Rhea" id="RHEA:36631"/>
        <dbReference type="ChEBI" id="CHEBI:15378"/>
        <dbReference type="ChEBI" id="CHEBI:15379"/>
        <dbReference type="ChEBI" id="CHEBI:57870"/>
        <dbReference type="ChEBI" id="CHEBI:58033"/>
        <dbReference type="ChEBI" id="CHEBI:58272"/>
    </reaction>
</comment>
<comment type="cofactor">
    <cofactor evidence="1">
        <name>Mg(2+)</name>
        <dbReference type="ChEBI" id="CHEBI:18420"/>
    </cofactor>
    <text evidence="1">Binds 1 Mg(2+) ion per subunit.</text>
</comment>
<comment type="subunit">
    <text evidence="1">Heterohexadecamer of 8 large chains and 8 small chains.</text>
</comment>
<comment type="subcellular location">
    <subcellularLocation>
        <location>Plastid</location>
        <location>Chloroplast</location>
    </subcellularLocation>
</comment>
<comment type="miscellaneous">
    <text evidence="1">The basic functional RuBisCO is composed of a large chain homodimer in a 'head-to-tail' conformation. In form I RuBisCO this homodimer is arranged in a barrel-like tetramer with the small subunits forming a tetrameric 'cap' on each end of the 'barrel'.</text>
</comment>
<comment type="similarity">
    <text evidence="1">Belongs to the RuBisCO large chain family. Type I subfamily.</text>
</comment>
<evidence type="ECO:0000255" key="1">
    <source>
        <dbReference type="HAMAP-Rule" id="MF_01338"/>
    </source>
</evidence>